<gene>
    <name evidence="1" type="primary">pckA</name>
    <name type="ordered locus">PLES_55861</name>
</gene>
<organism>
    <name type="scientific">Pseudomonas aeruginosa (strain LESB58)</name>
    <dbReference type="NCBI Taxonomy" id="557722"/>
    <lineage>
        <taxon>Bacteria</taxon>
        <taxon>Pseudomonadati</taxon>
        <taxon>Pseudomonadota</taxon>
        <taxon>Gammaproteobacteria</taxon>
        <taxon>Pseudomonadales</taxon>
        <taxon>Pseudomonadaceae</taxon>
        <taxon>Pseudomonas</taxon>
    </lineage>
</organism>
<evidence type="ECO:0000255" key="1">
    <source>
        <dbReference type="HAMAP-Rule" id="MF_00453"/>
    </source>
</evidence>
<dbReference type="EC" id="4.1.1.49" evidence="1"/>
<dbReference type="EMBL" id="FM209186">
    <property type="protein sequence ID" value="CAW30340.1"/>
    <property type="molecule type" value="Genomic_DNA"/>
</dbReference>
<dbReference type="RefSeq" id="WP_012614656.1">
    <property type="nucleotide sequence ID" value="NC_011770.1"/>
</dbReference>
<dbReference type="SMR" id="B7V3T9"/>
<dbReference type="KEGG" id="pag:PLES_55861"/>
<dbReference type="HOGENOM" id="CLU_018247_0_1_6"/>
<dbReference type="UniPathway" id="UPA00138"/>
<dbReference type="GO" id="GO:0005829">
    <property type="term" value="C:cytosol"/>
    <property type="evidence" value="ECO:0007669"/>
    <property type="project" value="TreeGrafter"/>
</dbReference>
<dbReference type="GO" id="GO:0005524">
    <property type="term" value="F:ATP binding"/>
    <property type="evidence" value="ECO:0007669"/>
    <property type="project" value="UniProtKB-UniRule"/>
</dbReference>
<dbReference type="GO" id="GO:0046872">
    <property type="term" value="F:metal ion binding"/>
    <property type="evidence" value="ECO:0007669"/>
    <property type="project" value="UniProtKB-KW"/>
</dbReference>
<dbReference type="GO" id="GO:0004612">
    <property type="term" value="F:phosphoenolpyruvate carboxykinase (ATP) activity"/>
    <property type="evidence" value="ECO:0007669"/>
    <property type="project" value="UniProtKB-UniRule"/>
</dbReference>
<dbReference type="GO" id="GO:0006094">
    <property type="term" value="P:gluconeogenesis"/>
    <property type="evidence" value="ECO:0007669"/>
    <property type="project" value="UniProtKB-UniRule"/>
</dbReference>
<dbReference type="CDD" id="cd00484">
    <property type="entry name" value="PEPCK_ATP"/>
    <property type="match status" value="1"/>
</dbReference>
<dbReference type="Gene3D" id="3.90.228.20">
    <property type="match status" value="1"/>
</dbReference>
<dbReference type="Gene3D" id="3.40.449.10">
    <property type="entry name" value="Phosphoenolpyruvate Carboxykinase, domain 1"/>
    <property type="match status" value="1"/>
</dbReference>
<dbReference type="Gene3D" id="2.170.8.10">
    <property type="entry name" value="Phosphoenolpyruvate Carboxykinase, domain 2"/>
    <property type="match status" value="1"/>
</dbReference>
<dbReference type="HAMAP" id="MF_00453">
    <property type="entry name" value="PEPCK_ATP"/>
    <property type="match status" value="1"/>
</dbReference>
<dbReference type="InterPro" id="IPR001272">
    <property type="entry name" value="PEP_carboxykinase_ATP"/>
</dbReference>
<dbReference type="InterPro" id="IPR013035">
    <property type="entry name" value="PEP_carboxykinase_C"/>
</dbReference>
<dbReference type="InterPro" id="IPR008210">
    <property type="entry name" value="PEP_carboxykinase_N"/>
</dbReference>
<dbReference type="InterPro" id="IPR015994">
    <property type="entry name" value="PEPCK_ATP_CS"/>
</dbReference>
<dbReference type="NCBIfam" id="TIGR00224">
    <property type="entry name" value="pckA"/>
    <property type="match status" value="1"/>
</dbReference>
<dbReference type="NCBIfam" id="NF006820">
    <property type="entry name" value="PRK09344.1-2"/>
    <property type="match status" value="1"/>
</dbReference>
<dbReference type="NCBIfam" id="NF006821">
    <property type="entry name" value="PRK09344.1-3"/>
    <property type="match status" value="1"/>
</dbReference>
<dbReference type="NCBIfam" id="NF006823">
    <property type="entry name" value="PRK09344.1-5"/>
    <property type="match status" value="1"/>
</dbReference>
<dbReference type="PANTHER" id="PTHR30031:SF0">
    <property type="entry name" value="PHOSPHOENOLPYRUVATE CARBOXYKINASE (ATP)"/>
    <property type="match status" value="1"/>
</dbReference>
<dbReference type="PANTHER" id="PTHR30031">
    <property type="entry name" value="PHOSPHOENOLPYRUVATE CARBOXYKINASE ATP"/>
    <property type="match status" value="1"/>
</dbReference>
<dbReference type="Pfam" id="PF01293">
    <property type="entry name" value="PEPCK_ATP"/>
    <property type="match status" value="1"/>
</dbReference>
<dbReference type="PIRSF" id="PIRSF006294">
    <property type="entry name" value="PEP_crbxkin"/>
    <property type="match status" value="1"/>
</dbReference>
<dbReference type="SUPFAM" id="SSF68923">
    <property type="entry name" value="PEP carboxykinase N-terminal domain"/>
    <property type="match status" value="1"/>
</dbReference>
<dbReference type="SUPFAM" id="SSF53795">
    <property type="entry name" value="PEP carboxykinase-like"/>
    <property type="match status" value="1"/>
</dbReference>
<dbReference type="PROSITE" id="PS00532">
    <property type="entry name" value="PEPCK_ATP"/>
    <property type="match status" value="1"/>
</dbReference>
<keyword id="KW-0067">ATP-binding</keyword>
<keyword id="KW-0963">Cytoplasm</keyword>
<keyword id="KW-0210">Decarboxylase</keyword>
<keyword id="KW-0312">Gluconeogenesis</keyword>
<keyword id="KW-0456">Lyase</keyword>
<keyword id="KW-0464">Manganese</keyword>
<keyword id="KW-0479">Metal-binding</keyword>
<keyword id="KW-0547">Nucleotide-binding</keyword>
<sequence>MTQANNAVYTDISAAQLVEEAIRRGEGELAANGSLVVRTGHRTGRSPVDRFIVEEPSTKDAIAWGNINRPFPADKFDALWARVEAFNNAQDHFISHVHVGSAEAYYLPVKMTTATAWQNLFGRCLFIEPEQYNPAGKDEWQVLNVANFECVPERDGTNSDGCVILNFAQKKVLIAGMRYAGEMKKAMFSVQNFLLPERDVLPMHCAANIGEAGDVTLFFGLSGTGKTTLSADESRYLIGDDEHGWGEGVVFNVEGGCYAKCIDLSEKNEPVIWKAIKFGAVLENVVLDEERVPNYADDSLTQNSRAAYPLEHVEKRSEKNLGGEPNAVIFLTCDLTGVLPPVSILNNEQAAYHFLSGYTALVGSTEMGSGGGIKSTFSTCFGAPFFPRPAGVYAELLIKRIKAFGSKVYLVNTGWTGGGYGVGKRFNIPTTRGVIAAIQSGALIGAETEHLDIINLDVPKAVPGVETNLLNPRNTWADKAAYDEAAKGLAKQFIENFKKFEVSDAIKAAGPQL</sequence>
<name>PCKA_PSEA8</name>
<protein>
    <recommendedName>
        <fullName evidence="1">Phosphoenolpyruvate carboxykinase (ATP)</fullName>
        <shortName evidence="1">PCK</shortName>
        <shortName evidence="1">PEP carboxykinase</shortName>
        <shortName evidence="1">PEPCK</shortName>
        <ecNumber evidence="1">4.1.1.49</ecNumber>
    </recommendedName>
</protein>
<feature type="chain" id="PRO_1000125081" description="Phosphoenolpyruvate carboxykinase (ATP)">
    <location>
        <begin position="1"/>
        <end position="513"/>
    </location>
</feature>
<feature type="binding site" evidence="1">
    <location>
        <position position="45"/>
    </location>
    <ligand>
        <name>substrate</name>
    </ligand>
</feature>
<feature type="binding site" evidence="1">
    <location>
        <position position="179"/>
    </location>
    <ligand>
        <name>substrate</name>
    </ligand>
</feature>
<feature type="binding site" evidence="1">
    <location>
        <position position="185"/>
    </location>
    <ligand>
        <name>ATP</name>
        <dbReference type="ChEBI" id="CHEBI:30616"/>
    </ligand>
</feature>
<feature type="binding site" evidence="1">
    <location>
        <position position="185"/>
    </location>
    <ligand>
        <name>Mn(2+)</name>
        <dbReference type="ChEBI" id="CHEBI:29035"/>
    </ligand>
</feature>
<feature type="binding site" evidence="1">
    <location>
        <position position="185"/>
    </location>
    <ligand>
        <name>substrate</name>
    </ligand>
</feature>
<feature type="binding site" evidence="1">
    <location>
        <position position="204"/>
    </location>
    <ligand>
        <name>ATP</name>
        <dbReference type="ChEBI" id="CHEBI:30616"/>
    </ligand>
</feature>
<feature type="binding site" evidence="1">
    <location>
        <position position="204"/>
    </location>
    <ligand>
        <name>Mn(2+)</name>
        <dbReference type="ChEBI" id="CHEBI:29035"/>
    </ligand>
</feature>
<feature type="binding site" evidence="1">
    <location>
        <begin position="220"/>
        <end position="228"/>
    </location>
    <ligand>
        <name>ATP</name>
        <dbReference type="ChEBI" id="CHEBI:30616"/>
    </ligand>
</feature>
<feature type="binding site" evidence="1">
    <location>
        <position position="241"/>
    </location>
    <ligand>
        <name>Mn(2+)</name>
        <dbReference type="ChEBI" id="CHEBI:29035"/>
    </ligand>
</feature>
<feature type="binding site" evidence="1">
    <location>
        <position position="269"/>
    </location>
    <ligand>
        <name>ATP</name>
        <dbReference type="ChEBI" id="CHEBI:30616"/>
    </ligand>
</feature>
<feature type="binding site" evidence="1">
    <location>
        <position position="305"/>
    </location>
    <ligand>
        <name>ATP</name>
        <dbReference type="ChEBI" id="CHEBI:30616"/>
    </ligand>
</feature>
<feature type="binding site" evidence="1">
    <location>
        <position position="305"/>
    </location>
    <ligand>
        <name>substrate</name>
    </ligand>
</feature>
<feature type="binding site" evidence="1">
    <location>
        <position position="431"/>
    </location>
    <ligand>
        <name>ATP</name>
        <dbReference type="ChEBI" id="CHEBI:30616"/>
    </ligand>
</feature>
<proteinExistence type="inferred from homology"/>
<reference key="1">
    <citation type="journal article" date="2009" name="Genome Res.">
        <title>Newly introduced genomic prophage islands are critical determinants of in vivo competitiveness in the Liverpool epidemic strain of Pseudomonas aeruginosa.</title>
        <authorList>
            <person name="Winstanley C."/>
            <person name="Langille M.G.I."/>
            <person name="Fothergill J.L."/>
            <person name="Kukavica-Ibrulj I."/>
            <person name="Paradis-Bleau C."/>
            <person name="Sanschagrin F."/>
            <person name="Thomson N.R."/>
            <person name="Winsor G.L."/>
            <person name="Quail M.A."/>
            <person name="Lennard N."/>
            <person name="Bignell A."/>
            <person name="Clarke L."/>
            <person name="Seeger K."/>
            <person name="Saunders D."/>
            <person name="Harris D."/>
            <person name="Parkhill J."/>
            <person name="Hancock R.E.W."/>
            <person name="Brinkman F.S.L."/>
            <person name="Levesque R.C."/>
        </authorList>
    </citation>
    <scope>NUCLEOTIDE SEQUENCE [LARGE SCALE GENOMIC DNA]</scope>
    <source>
        <strain>LESB58</strain>
    </source>
</reference>
<comment type="function">
    <text evidence="1">Involved in the gluconeogenesis. Catalyzes the conversion of oxaloacetate (OAA) to phosphoenolpyruvate (PEP) through direct phosphoryl transfer between the nucleoside triphosphate and OAA.</text>
</comment>
<comment type="catalytic activity">
    <reaction evidence="1">
        <text>oxaloacetate + ATP = phosphoenolpyruvate + ADP + CO2</text>
        <dbReference type="Rhea" id="RHEA:18617"/>
        <dbReference type="ChEBI" id="CHEBI:16452"/>
        <dbReference type="ChEBI" id="CHEBI:16526"/>
        <dbReference type="ChEBI" id="CHEBI:30616"/>
        <dbReference type="ChEBI" id="CHEBI:58702"/>
        <dbReference type="ChEBI" id="CHEBI:456216"/>
        <dbReference type="EC" id="4.1.1.49"/>
    </reaction>
</comment>
<comment type="cofactor">
    <cofactor evidence="1">
        <name>Mn(2+)</name>
        <dbReference type="ChEBI" id="CHEBI:29035"/>
    </cofactor>
    <text evidence="1">Binds 1 Mn(2+) ion per subunit.</text>
</comment>
<comment type="pathway">
    <text evidence="1">Carbohydrate biosynthesis; gluconeogenesis.</text>
</comment>
<comment type="subunit">
    <text evidence="1">Monomer.</text>
</comment>
<comment type="subcellular location">
    <subcellularLocation>
        <location evidence="1">Cytoplasm</location>
    </subcellularLocation>
</comment>
<comment type="similarity">
    <text evidence="1">Belongs to the phosphoenolpyruvate carboxykinase (ATP) family.</text>
</comment>
<accession>B7V3T9</accession>